<proteinExistence type="inferred from homology"/>
<organism>
    <name type="scientific">Pelodictyon phaeoclathratiforme (strain DSM 5477 / BU-1)</name>
    <dbReference type="NCBI Taxonomy" id="324925"/>
    <lineage>
        <taxon>Bacteria</taxon>
        <taxon>Pseudomonadati</taxon>
        <taxon>Chlorobiota</taxon>
        <taxon>Chlorobiia</taxon>
        <taxon>Chlorobiales</taxon>
        <taxon>Chlorobiaceae</taxon>
        <taxon>Chlorobium/Pelodictyon group</taxon>
        <taxon>Pelodictyon</taxon>
    </lineage>
</organism>
<evidence type="ECO:0000255" key="1">
    <source>
        <dbReference type="HAMAP-Rule" id="MF_01356"/>
    </source>
</evidence>
<protein>
    <recommendedName>
        <fullName evidence="1">NADH-quinone oxidoreductase subunit B</fullName>
        <ecNumber evidence="1">7.1.1.-</ecNumber>
    </recommendedName>
    <alternativeName>
        <fullName evidence="1">NADH dehydrogenase I subunit B</fullName>
    </alternativeName>
    <alternativeName>
        <fullName evidence="1">NDH-1 subunit B</fullName>
    </alternativeName>
</protein>
<name>NUOB_PELPB</name>
<comment type="function">
    <text evidence="1">NDH-1 shuttles electrons from NADH, via FMN and iron-sulfur (Fe-S) centers, to quinones in the respiratory chain. The immediate electron acceptor for the enzyme in this species is believed to be a menaquinone. Couples the redox reaction to proton translocation (for every two electrons transferred, four hydrogen ions are translocated across the cytoplasmic membrane), and thus conserves the redox energy in a proton gradient.</text>
</comment>
<comment type="catalytic activity">
    <reaction evidence="1">
        <text>a quinone + NADH + 5 H(+)(in) = a quinol + NAD(+) + 4 H(+)(out)</text>
        <dbReference type="Rhea" id="RHEA:57888"/>
        <dbReference type="ChEBI" id="CHEBI:15378"/>
        <dbReference type="ChEBI" id="CHEBI:24646"/>
        <dbReference type="ChEBI" id="CHEBI:57540"/>
        <dbReference type="ChEBI" id="CHEBI:57945"/>
        <dbReference type="ChEBI" id="CHEBI:132124"/>
    </reaction>
</comment>
<comment type="cofactor">
    <cofactor evidence="1">
        <name>[4Fe-4S] cluster</name>
        <dbReference type="ChEBI" id="CHEBI:49883"/>
    </cofactor>
    <text evidence="1">Binds 1 [4Fe-4S] cluster.</text>
</comment>
<comment type="subunit">
    <text evidence="1">NDH-1 is composed of 14 different subunits. Subunits NuoB, C, D, E, F, and G constitute the peripheral sector of the complex.</text>
</comment>
<comment type="subcellular location">
    <subcellularLocation>
        <location evidence="1">Cell inner membrane</location>
        <topology evidence="1">Peripheral membrane protein</topology>
        <orientation evidence="1">Cytoplasmic side</orientation>
    </subcellularLocation>
</comment>
<comment type="similarity">
    <text evidence="1">Belongs to the complex I 20 kDa subunit family.</text>
</comment>
<accession>B4SBZ2</accession>
<gene>
    <name evidence="1" type="primary">nuoB</name>
    <name type="ordered locus">Ppha_1872</name>
</gene>
<feature type="chain" id="PRO_0000376300" description="NADH-quinone oxidoreductase subunit B">
    <location>
        <begin position="1"/>
        <end position="189"/>
    </location>
</feature>
<feature type="binding site" evidence="1">
    <location>
        <position position="39"/>
    </location>
    <ligand>
        <name>[4Fe-4S] cluster</name>
        <dbReference type="ChEBI" id="CHEBI:49883"/>
    </ligand>
</feature>
<feature type="binding site" evidence="1">
    <location>
        <position position="40"/>
    </location>
    <ligand>
        <name>[4Fe-4S] cluster</name>
        <dbReference type="ChEBI" id="CHEBI:49883"/>
    </ligand>
</feature>
<feature type="binding site" evidence="1">
    <location>
        <position position="104"/>
    </location>
    <ligand>
        <name>[4Fe-4S] cluster</name>
        <dbReference type="ChEBI" id="CHEBI:49883"/>
    </ligand>
</feature>
<feature type="binding site" evidence="1">
    <location>
        <position position="135"/>
    </location>
    <ligand>
        <name>[4Fe-4S] cluster</name>
        <dbReference type="ChEBI" id="CHEBI:49883"/>
    </ligand>
</feature>
<dbReference type="EC" id="7.1.1.-" evidence="1"/>
<dbReference type="EMBL" id="CP001110">
    <property type="protein sequence ID" value="ACF44098.1"/>
    <property type="molecule type" value="Genomic_DNA"/>
</dbReference>
<dbReference type="RefSeq" id="WP_012508582.1">
    <property type="nucleotide sequence ID" value="NC_011060.1"/>
</dbReference>
<dbReference type="SMR" id="B4SBZ2"/>
<dbReference type="STRING" id="324925.Ppha_1872"/>
<dbReference type="KEGG" id="pph:Ppha_1872"/>
<dbReference type="eggNOG" id="COG0377">
    <property type="taxonomic scope" value="Bacteria"/>
</dbReference>
<dbReference type="HOGENOM" id="CLU_055737_7_3_10"/>
<dbReference type="OrthoDB" id="9786737at2"/>
<dbReference type="Proteomes" id="UP000002724">
    <property type="component" value="Chromosome"/>
</dbReference>
<dbReference type="GO" id="GO:0005886">
    <property type="term" value="C:plasma membrane"/>
    <property type="evidence" value="ECO:0007669"/>
    <property type="project" value="UniProtKB-SubCell"/>
</dbReference>
<dbReference type="GO" id="GO:0045271">
    <property type="term" value="C:respiratory chain complex I"/>
    <property type="evidence" value="ECO:0007669"/>
    <property type="project" value="TreeGrafter"/>
</dbReference>
<dbReference type="GO" id="GO:0051539">
    <property type="term" value="F:4 iron, 4 sulfur cluster binding"/>
    <property type="evidence" value="ECO:0007669"/>
    <property type="project" value="UniProtKB-KW"/>
</dbReference>
<dbReference type="GO" id="GO:0005506">
    <property type="term" value="F:iron ion binding"/>
    <property type="evidence" value="ECO:0007669"/>
    <property type="project" value="UniProtKB-UniRule"/>
</dbReference>
<dbReference type="GO" id="GO:0008137">
    <property type="term" value="F:NADH dehydrogenase (ubiquinone) activity"/>
    <property type="evidence" value="ECO:0007669"/>
    <property type="project" value="InterPro"/>
</dbReference>
<dbReference type="GO" id="GO:0050136">
    <property type="term" value="F:NADH:ubiquinone reductase (non-electrogenic) activity"/>
    <property type="evidence" value="ECO:0007669"/>
    <property type="project" value="UniProtKB-UniRule"/>
</dbReference>
<dbReference type="GO" id="GO:0048038">
    <property type="term" value="F:quinone binding"/>
    <property type="evidence" value="ECO:0007669"/>
    <property type="project" value="UniProtKB-KW"/>
</dbReference>
<dbReference type="GO" id="GO:0009060">
    <property type="term" value="P:aerobic respiration"/>
    <property type="evidence" value="ECO:0007669"/>
    <property type="project" value="TreeGrafter"/>
</dbReference>
<dbReference type="GO" id="GO:0015990">
    <property type="term" value="P:electron transport coupled proton transport"/>
    <property type="evidence" value="ECO:0007669"/>
    <property type="project" value="TreeGrafter"/>
</dbReference>
<dbReference type="FunFam" id="3.40.50.12280:FF:000002">
    <property type="entry name" value="NADH-quinone oxidoreductase subunit B"/>
    <property type="match status" value="1"/>
</dbReference>
<dbReference type="Gene3D" id="3.40.50.12280">
    <property type="match status" value="1"/>
</dbReference>
<dbReference type="HAMAP" id="MF_01356">
    <property type="entry name" value="NDH1_NuoB"/>
    <property type="match status" value="1"/>
</dbReference>
<dbReference type="InterPro" id="IPR006137">
    <property type="entry name" value="NADH_UbQ_OxRdtase-like_20kDa"/>
</dbReference>
<dbReference type="InterPro" id="IPR006138">
    <property type="entry name" value="NADH_UQ_OxRdtase_20Kd_su"/>
</dbReference>
<dbReference type="NCBIfam" id="TIGR01957">
    <property type="entry name" value="nuoB_fam"/>
    <property type="match status" value="1"/>
</dbReference>
<dbReference type="NCBIfam" id="NF005012">
    <property type="entry name" value="PRK06411.1"/>
    <property type="match status" value="1"/>
</dbReference>
<dbReference type="NCBIfam" id="NF011388">
    <property type="entry name" value="PRK14813.1"/>
    <property type="match status" value="1"/>
</dbReference>
<dbReference type="PANTHER" id="PTHR11995">
    <property type="entry name" value="NADH DEHYDROGENASE"/>
    <property type="match status" value="1"/>
</dbReference>
<dbReference type="PANTHER" id="PTHR11995:SF33">
    <property type="entry name" value="NADH-QUINONE OXIDOREDUCTASE SUBUNIT B 2"/>
    <property type="match status" value="1"/>
</dbReference>
<dbReference type="Pfam" id="PF01058">
    <property type="entry name" value="Oxidored_q6"/>
    <property type="match status" value="1"/>
</dbReference>
<dbReference type="SUPFAM" id="SSF56770">
    <property type="entry name" value="HydA/Nqo6-like"/>
    <property type="match status" value="1"/>
</dbReference>
<dbReference type="PROSITE" id="PS01150">
    <property type="entry name" value="COMPLEX1_20K"/>
    <property type="match status" value="1"/>
</dbReference>
<keyword id="KW-0004">4Fe-4S</keyword>
<keyword id="KW-0997">Cell inner membrane</keyword>
<keyword id="KW-1003">Cell membrane</keyword>
<keyword id="KW-0408">Iron</keyword>
<keyword id="KW-0411">Iron-sulfur</keyword>
<keyword id="KW-0472">Membrane</keyword>
<keyword id="KW-0479">Metal-binding</keyword>
<keyword id="KW-0520">NAD</keyword>
<keyword id="KW-0874">Quinone</keyword>
<keyword id="KW-1185">Reference proteome</keyword>
<keyword id="KW-1278">Translocase</keyword>
<keyword id="KW-0813">Transport</keyword>
<sequence>MGLLDAGITQHNVLITSVDNVLNWARLSSLWPMGFGLACCAIEMMATNASNYDLERFGIFPRSSPRQSDLMIVAGTVTMKMAERVIRLYEQMPEPRYVLSMGSCSNCGGPYWEHGYHVLKGVDRVIPVDVFVPGCPPRPESLIGGLMKVQELIRMEQIGLSRADALKKLAEKSVDPQFVIERERKAAGA</sequence>
<reference key="1">
    <citation type="submission" date="2008-06" db="EMBL/GenBank/DDBJ databases">
        <title>Complete sequence of Pelodictyon phaeoclathratiforme BU-1.</title>
        <authorList>
            <consortium name="US DOE Joint Genome Institute"/>
            <person name="Lucas S."/>
            <person name="Copeland A."/>
            <person name="Lapidus A."/>
            <person name="Glavina del Rio T."/>
            <person name="Dalin E."/>
            <person name="Tice H."/>
            <person name="Bruce D."/>
            <person name="Goodwin L."/>
            <person name="Pitluck S."/>
            <person name="Schmutz J."/>
            <person name="Larimer F."/>
            <person name="Land M."/>
            <person name="Hauser L."/>
            <person name="Kyrpides N."/>
            <person name="Mikhailova N."/>
            <person name="Liu Z."/>
            <person name="Li T."/>
            <person name="Zhao F."/>
            <person name="Overmann J."/>
            <person name="Bryant D.A."/>
            <person name="Richardson P."/>
        </authorList>
    </citation>
    <scope>NUCLEOTIDE SEQUENCE [LARGE SCALE GENOMIC DNA]</scope>
    <source>
        <strain>DSM 5477 / BU-1</strain>
    </source>
</reference>